<keyword id="KW-0997">Cell inner membrane</keyword>
<keyword id="KW-1003">Cell membrane</keyword>
<keyword id="KW-0406">Ion transport</keyword>
<keyword id="KW-0472">Membrane</keyword>
<keyword id="KW-0630">Potassium</keyword>
<keyword id="KW-0633">Potassium transport</keyword>
<keyword id="KW-0812">Transmembrane</keyword>
<keyword id="KW-1133">Transmembrane helix</keyword>
<keyword id="KW-0813">Transport</keyword>
<accession>B5FNE1</accession>
<reference key="1">
    <citation type="journal article" date="2011" name="J. Bacteriol.">
        <title>Comparative genomics of 28 Salmonella enterica isolates: evidence for CRISPR-mediated adaptive sublineage evolution.</title>
        <authorList>
            <person name="Fricke W.F."/>
            <person name="Mammel M.K."/>
            <person name="McDermott P.F."/>
            <person name="Tartera C."/>
            <person name="White D.G."/>
            <person name="Leclerc J.E."/>
            <person name="Ravel J."/>
            <person name="Cebula T.A."/>
        </authorList>
    </citation>
    <scope>NUCLEOTIDE SEQUENCE [LARGE SCALE GENOMIC DNA]</scope>
    <source>
        <strain>CT_02021853</strain>
    </source>
</reference>
<name>KDPA_SALDC</name>
<evidence type="ECO:0000255" key="1">
    <source>
        <dbReference type="HAMAP-Rule" id="MF_00275"/>
    </source>
</evidence>
<organism>
    <name type="scientific">Salmonella dublin (strain CT_02021853)</name>
    <dbReference type="NCBI Taxonomy" id="439851"/>
    <lineage>
        <taxon>Bacteria</taxon>
        <taxon>Pseudomonadati</taxon>
        <taxon>Pseudomonadota</taxon>
        <taxon>Gammaproteobacteria</taxon>
        <taxon>Enterobacterales</taxon>
        <taxon>Enterobacteriaceae</taxon>
        <taxon>Salmonella</taxon>
    </lineage>
</organism>
<protein>
    <recommendedName>
        <fullName evidence="1">Potassium-transporting ATPase potassium-binding subunit</fullName>
    </recommendedName>
    <alternativeName>
        <fullName evidence="1">ATP phosphohydrolase [potassium-transporting] A chain</fullName>
    </alternativeName>
    <alternativeName>
        <fullName evidence="1">Potassium-binding and translocating subunit A</fullName>
    </alternativeName>
    <alternativeName>
        <fullName evidence="1">Potassium-translocating ATPase A chain</fullName>
    </alternativeName>
</protein>
<sequence length="559" mass="59335">MAAQGFLLIASFLLILLVLAKPLGSGLARLIAAVPLPGVAGVERILWRTLGITDHEMNWRQYLLALLTLNLLGLGILFCLLFWQEWLPLNPQRLPGLSRDLALNTAVSFVTNTNWQAYSGESTLSYFSQMAGLTVQNFLSAATGIAVVFALIRAFTRQNVHTLGNAWQDLVRITLWILFPVALIIALFFIQQGVPQNLSAYQPITTLEGAKQLLPMGPVASQEAIKMLGTNGGGFFNANSSHPFENPTALTNLAQMLAIFLIPAALCFAFGEAAGDRRQGRALLWAMSFIFVVCVAVVMWAEVQGNPHLLAAGADSSVNMEGKETRFGVLASSLFAVVTTAASCGAVNAMHDSFTALGGMVPMWLMQIGEVVFGGVGSGLYGMLLFVLLAVFIAGLMIGRTPEYLGKKIDVREMKMTALAILVTPMLVLLGSALAMMTDAGRSAMLNPGPHGFSEVLYAVSSAANNNGSAFAGLSANSPFWNCLLAFCMFVGRFGVIIPVMAIAGSLVSKKVQPASQGTLATHGALFIGLLIGTVLLVGALTFIPALALGPVAEHFSLP</sequence>
<feature type="chain" id="PRO_1000114699" description="Potassium-transporting ATPase potassium-binding subunit">
    <location>
        <begin position="1"/>
        <end position="559"/>
    </location>
</feature>
<feature type="transmembrane region" description="Helical" evidence="1">
    <location>
        <begin position="5"/>
        <end position="25"/>
    </location>
</feature>
<feature type="transmembrane region" description="Helical" evidence="1">
    <location>
        <begin position="27"/>
        <end position="47"/>
    </location>
</feature>
<feature type="transmembrane region" description="Helical" evidence="1">
    <location>
        <begin position="63"/>
        <end position="83"/>
    </location>
</feature>
<feature type="transmembrane region" description="Helical" evidence="1">
    <location>
        <begin position="132"/>
        <end position="152"/>
    </location>
</feature>
<feature type="transmembrane region" description="Helical" evidence="1">
    <location>
        <begin position="170"/>
        <end position="190"/>
    </location>
</feature>
<feature type="transmembrane region" description="Helical" evidence="1">
    <location>
        <begin position="253"/>
        <end position="273"/>
    </location>
</feature>
<feature type="transmembrane region" description="Helical" evidence="1">
    <location>
        <begin position="283"/>
        <end position="303"/>
    </location>
</feature>
<feature type="transmembrane region" description="Helical" evidence="1">
    <location>
        <begin position="327"/>
        <end position="347"/>
    </location>
</feature>
<feature type="transmembrane region" description="Helical" evidence="1">
    <location>
        <begin position="356"/>
        <end position="376"/>
    </location>
</feature>
<feature type="transmembrane region" description="Helical" evidence="1">
    <location>
        <begin position="379"/>
        <end position="399"/>
    </location>
</feature>
<feature type="transmembrane region" description="Helical" evidence="1">
    <location>
        <begin position="416"/>
        <end position="436"/>
    </location>
</feature>
<feature type="transmembrane region" description="Helical" evidence="1">
    <location>
        <begin position="484"/>
        <end position="504"/>
    </location>
</feature>
<feature type="transmembrane region" description="Helical" evidence="1">
    <location>
        <begin position="524"/>
        <end position="544"/>
    </location>
</feature>
<comment type="function">
    <text evidence="1">Part of the high-affinity ATP-driven potassium transport (or Kdp) system, which catalyzes the hydrolysis of ATP coupled with the electrogenic transport of potassium into the cytoplasm. This subunit binds the periplasmic potassium ions and delivers the ions to the membrane domain of KdpB through an intramembrane tunnel.</text>
</comment>
<comment type="subunit">
    <text evidence="1">The system is composed of three essential subunits: KdpA, KdpB and KdpC.</text>
</comment>
<comment type="subcellular location">
    <subcellularLocation>
        <location evidence="1">Cell inner membrane</location>
        <topology evidence="1">Multi-pass membrane protein</topology>
    </subcellularLocation>
</comment>
<comment type="similarity">
    <text evidence="1">Belongs to the KdpA family.</text>
</comment>
<dbReference type="EMBL" id="CP001144">
    <property type="protein sequence ID" value="ACH77916.1"/>
    <property type="molecule type" value="Genomic_DNA"/>
</dbReference>
<dbReference type="RefSeq" id="WP_000730072.1">
    <property type="nucleotide sequence ID" value="NC_011205.1"/>
</dbReference>
<dbReference type="SMR" id="B5FNE1"/>
<dbReference type="KEGG" id="sed:SeD_A0814"/>
<dbReference type="HOGENOM" id="CLU_018614_3_0_6"/>
<dbReference type="Proteomes" id="UP000008322">
    <property type="component" value="Chromosome"/>
</dbReference>
<dbReference type="GO" id="GO:0005886">
    <property type="term" value="C:plasma membrane"/>
    <property type="evidence" value="ECO:0007669"/>
    <property type="project" value="UniProtKB-SubCell"/>
</dbReference>
<dbReference type="GO" id="GO:0008556">
    <property type="term" value="F:P-type potassium transmembrane transporter activity"/>
    <property type="evidence" value="ECO:0007669"/>
    <property type="project" value="InterPro"/>
</dbReference>
<dbReference type="GO" id="GO:0030955">
    <property type="term" value="F:potassium ion binding"/>
    <property type="evidence" value="ECO:0007669"/>
    <property type="project" value="UniProtKB-UniRule"/>
</dbReference>
<dbReference type="HAMAP" id="MF_00275">
    <property type="entry name" value="KdpA"/>
    <property type="match status" value="1"/>
</dbReference>
<dbReference type="InterPro" id="IPR004623">
    <property type="entry name" value="KdpA"/>
</dbReference>
<dbReference type="NCBIfam" id="TIGR00680">
    <property type="entry name" value="kdpA"/>
    <property type="match status" value="1"/>
</dbReference>
<dbReference type="PANTHER" id="PTHR30607">
    <property type="entry name" value="POTASSIUM-TRANSPORTING ATPASE A CHAIN"/>
    <property type="match status" value="1"/>
</dbReference>
<dbReference type="PANTHER" id="PTHR30607:SF2">
    <property type="entry name" value="POTASSIUM-TRANSPORTING ATPASE POTASSIUM-BINDING SUBUNIT"/>
    <property type="match status" value="1"/>
</dbReference>
<dbReference type="Pfam" id="PF03814">
    <property type="entry name" value="KdpA"/>
    <property type="match status" value="1"/>
</dbReference>
<dbReference type="PIRSF" id="PIRSF001294">
    <property type="entry name" value="K_ATPaseA"/>
    <property type="match status" value="1"/>
</dbReference>
<gene>
    <name evidence="1" type="primary">kdpA</name>
    <name type="ordered locus">SeD_A0814</name>
</gene>
<proteinExistence type="inferred from homology"/>